<organism>
    <name type="scientific">Ipomoea platensis</name>
    <name type="common">Morning glory</name>
    <dbReference type="NCBI Taxonomy" id="35881"/>
    <lineage>
        <taxon>Eukaryota</taxon>
        <taxon>Viridiplantae</taxon>
        <taxon>Streptophyta</taxon>
        <taxon>Embryophyta</taxon>
        <taxon>Tracheophyta</taxon>
        <taxon>Spermatophyta</taxon>
        <taxon>Magnoliopsida</taxon>
        <taxon>eudicotyledons</taxon>
        <taxon>Gunneridae</taxon>
        <taxon>Pentapetalae</taxon>
        <taxon>asterids</taxon>
        <taxon>lamiids</taxon>
        <taxon>Solanales</taxon>
        <taxon>Convolvulaceae</taxon>
        <taxon>Ipomoeeae</taxon>
        <taxon>Ipomoea</taxon>
    </lineage>
</organism>
<keyword id="KW-0012">Acyltransferase</keyword>
<keyword id="KW-0284">Flavonoid biosynthesis</keyword>
<keyword id="KW-0808">Transferase</keyword>
<accession>P48400</accession>
<name>CHSA_IPOPL</name>
<evidence type="ECO:0000255" key="1">
    <source>
        <dbReference type="PROSITE-ProRule" id="PRU10023"/>
    </source>
</evidence>
<evidence type="ECO:0000305" key="2"/>
<proteinExistence type="evidence at transcript level"/>
<dbReference type="EC" id="2.3.1.74"/>
<dbReference type="EMBL" id="U15945">
    <property type="protein sequence ID" value="AAA62497.1"/>
    <property type="molecule type" value="mRNA"/>
</dbReference>
<dbReference type="SMR" id="P48400"/>
<dbReference type="UniPathway" id="UPA00154"/>
<dbReference type="GO" id="GO:0016210">
    <property type="term" value="F:naringenin-chalcone synthase activity"/>
    <property type="evidence" value="ECO:0007669"/>
    <property type="project" value="UniProtKB-EC"/>
</dbReference>
<dbReference type="GO" id="GO:0009813">
    <property type="term" value="P:flavonoid biosynthetic process"/>
    <property type="evidence" value="ECO:0007669"/>
    <property type="project" value="UniProtKB-UniPathway"/>
</dbReference>
<dbReference type="GO" id="GO:0030639">
    <property type="term" value="P:polyketide biosynthetic process"/>
    <property type="evidence" value="ECO:0007669"/>
    <property type="project" value="TreeGrafter"/>
</dbReference>
<dbReference type="CDD" id="cd00831">
    <property type="entry name" value="CHS_like"/>
    <property type="match status" value="1"/>
</dbReference>
<dbReference type="FunFam" id="3.40.47.10:FF:000014">
    <property type="entry name" value="Chalcone synthase 1"/>
    <property type="match status" value="1"/>
</dbReference>
<dbReference type="FunFam" id="3.40.47.10:FF:000025">
    <property type="entry name" value="Chalcone synthase 2"/>
    <property type="match status" value="1"/>
</dbReference>
<dbReference type="Gene3D" id="3.40.47.10">
    <property type="match status" value="2"/>
</dbReference>
<dbReference type="InterPro" id="IPR012328">
    <property type="entry name" value="Chalcone/stilbene_synt_C"/>
</dbReference>
<dbReference type="InterPro" id="IPR001099">
    <property type="entry name" value="Chalcone/stilbene_synt_N"/>
</dbReference>
<dbReference type="InterPro" id="IPR018088">
    <property type="entry name" value="Chalcone/stilbene_synthase_AS"/>
</dbReference>
<dbReference type="InterPro" id="IPR011141">
    <property type="entry name" value="Polyketide_synthase_type-III"/>
</dbReference>
<dbReference type="InterPro" id="IPR016039">
    <property type="entry name" value="Thiolase-like"/>
</dbReference>
<dbReference type="PANTHER" id="PTHR11877:SF104">
    <property type="entry name" value="CHALCONE SYNTHASE"/>
    <property type="match status" value="1"/>
</dbReference>
<dbReference type="PANTHER" id="PTHR11877">
    <property type="entry name" value="HYDROXYMETHYLGLUTARYL-COA SYNTHASE"/>
    <property type="match status" value="1"/>
</dbReference>
<dbReference type="Pfam" id="PF02797">
    <property type="entry name" value="Chal_sti_synt_C"/>
    <property type="match status" value="1"/>
</dbReference>
<dbReference type="Pfam" id="PF00195">
    <property type="entry name" value="Chal_sti_synt_N"/>
    <property type="match status" value="1"/>
</dbReference>
<dbReference type="PIRSF" id="PIRSF000451">
    <property type="entry name" value="PKS_III"/>
    <property type="match status" value="1"/>
</dbReference>
<dbReference type="SUPFAM" id="SSF53901">
    <property type="entry name" value="Thiolase-like"/>
    <property type="match status" value="2"/>
</dbReference>
<dbReference type="PROSITE" id="PS00441">
    <property type="entry name" value="CHALCONE_SYNTH"/>
    <property type="match status" value="1"/>
</dbReference>
<feature type="chain" id="PRO_0000215996" description="Chalcone synthase A">
    <location>
        <begin position="1"/>
        <end position="362" status="greater than"/>
    </location>
</feature>
<feature type="active site" evidence="1">
    <location>
        <position position="168"/>
    </location>
</feature>
<feature type="non-terminal residue">
    <location>
        <position position="362"/>
    </location>
</feature>
<protein>
    <recommendedName>
        <fullName>Chalcone synthase A</fullName>
        <ecNumber>2.3.1.74</ecNumber>
    </recommendedName>
    <alternativeName>
        <fullName>Naringenin-chalcone synthase A</fullName>
        <shortName>CHS-A</shortName>
    </alternativeName>
</protein>
<reference key="1">
    <citation type="journal article" date="1995" name="Proc. Natl. Acad. Sci. U.S.A.">
        <title>Evolution of the chalcone synthase gene family in the genus Ipomoea.</title>
        <authorList>
            <person name="Durbin M.L."/>
            <person name="Learn G.H."/>
            <person name="Huttley G.A."/>
            <person name="Clegg M.T."/>
        </authorList>
    </citation>
    <scope>NUCLEOTIDE SEQUENCE [MRNA]</scope>
</reference>
<comment type="function">
    <text>The primary product of this enzyme is 4,2',4',6'-tetrahydroxychalcone (also termed naringenin-chalcone or chalcone) which can under specific conditions spontaneously isomerize into naringenin.</text>
</comment>
<comment type="catalytic activity">
    <reaction evidence="1">
        <text>(E)-4-coumaroyl-CoA + 3 malonyl-CoA + 3 H(+) = 2',4,4',6'-tetrahydroxychalcone + 3 CO2 + 4 CoA</text>
        <dbReference type="Rhea" id="RHEA:11128"/>
        <dbReference type="ChEBI" id="CHEBI:15378"/>
        <dbReference type="ChEBI" id="CHEBI:15413"/>
        <dbReference type="ChEBI" id="CHEBI:16526"/>
        <dbReference type="ChEBI" id="CHEBI:57287"/>
        <dbReference type="ChEBI" id="CHEBI:57384"/>
        <dbReference type="ChEBI" id="CHEBI:85008"/>
        <dbReference type="EC" id="2.3.1.74"/>
    </reaction>
</comment>
<comment type="pathway">
    <text>Secondary metabolite biosynthesis; flavonoid biosynthesis.</text>
</comment>
<comment type="similarity">
    <text evidence="2">Belongs to the thiolase-like superfamily. Chalcone/stilbene synthases family.</text>
</comment>
<sequence>MSTTVLPDTWSRRAKRFEGHAKILAVGTATPANWVDQTTYPDFYFRITNSEHLLEHKEKFRRICNKSKIRKRHLVLTEELLKKNPNLCTYNETSLNTRQDTLVSEVPKLGKEAAMKAIKEWGRPISEITHLVFCTTSGVDMPGADFQLTKLLGLNISVKRLMMYQQGCNAGAAMLRLAKDLAENNKGARVLVVCSEVTLSVFRGPSLQQEDNLLAQCLFGDGSAAVIVGTDPRPGLETPLFELVSSAQTIIPDTDSHLKLHLLEMGLTFHCSKAVPSLITQNVEDCLVKAFEPFGISDWNSIFWILHPGGNAILDRVEERLGLGPEKLRASRDVLSEYGNLTSACVLFILDLVRRKSKKQQQ</sequence>
<gene>
    <name type="primary">CHSA</name>
</gene>